<accession>P55173</accession>
<feature type="chain" id="PRO_0000219983" description="Pyrroloquinoline-quinone synthase">
    <location>
        <begin position="1"/>
        <end position="11" status="greater than"/>
    </location>
</feature>
<feature type="non-terminal residue">
    <location>
        <position position="11"/>
    </location>
</feature>
<reference key="1">
    <citation type="journal article" date="1995" name="Appl. Environ. Microbiol.">
        <title>Tn5-directed cloning of pqq genes from Pseudomonas fluorescens CHA0: mutational inactivation of the genes results in overproduction of the antibiotic pyoluteorin.</title>
        <authorList>
            <person name="Schnider U."/>
            <person name="Keel C."/>
            <person name="Defago G."/>
            <person name="Haas D."/>
        </authorList>
    </citation>
    <scope>NUCLEOTIDE SEQUENCE [GENOMIC DNA]</scope>
    <source>
        <strain>DSM 19095 / LMG 27888 / CFBP 6595 / CHA0</strain>
    </source>
</reference>
<gene>
    <name type="primary">pqqC</name>
</gene>
<name>PQQC_PSEPH</name>
<proteinExistence type="inferred from homology"/>
<protein>
    <recommendedName>
        <fullName>Pyrroloquinoline-quinone synthase</fullName>
        <ecNumber>1.3.3.11</ecNumber>
    </recommendedName>
    <alternativeName>
        <fullName>Coenzyme PQQ synthesis protein C</fullName>
    </alternativeName>
    <alternativeName>
        <fullName>Pyrroloquinoline quinone biosynthesis protein C</fullName>
    </alternativeName>
</protein>
<sequence length="11" mass="1182">MTDTPLSAAEF</sequence>
<evidence type="ECO:0000250" key="1"/>
<evidence type="ECO:0000305" key="2"/>
<dbReference type="EC" id="1.3.3.11"/>
<dbReference type="EMBL" id="X87299">
    <property type="protein sequence ID" value="CAA60734.1"/>
    <property type="molecule type" value="Genomic_DNA"/>
</dbReference>
<dbReference type="PIR" id="S58244">
    <property type="entry name" value="S58244"/>
</dbReference>
<dbReference type="UniPathway" id="UPA00539"/>
<dbReference type="GO" id="GO:0033732">
    <property type="term" value="F:pyrroloquinoline-quinone synthase activity"/>
    <property type="evidence" value="ECO:0007669"/>
    <property type="project" value="UniProtKB-EC"/>
</dbReference>
<dbReference type="GO" id="GO:0018189">
    <property type="term" value="P:pyrroloquinoline quinone biosynthetic process"/>
    <property type="evidence" value="ECO:0007669"/>
    <property type="project" value="UniProtKB-UniPathway"/>
</dbReference>
<keyword id="KW-0560">Oxidoreductase</keyword>
<keyword id="KW-0884">PQQ biosynthesis</keyword>
<organism>
    <name type="scientific">Pseudomonas protegens (strain DSM 19095 / LMG 27888 / CFBP 6595 / CHA0)</name>
    <dbReference type="NCBI Taxonomy" id="1124983"/>
    <lineage>
        <taxon>Bacteria</taxon>
        <taxon>Pseudomonadati</taxon>
        <taxon>Pseudomonadota</taxon>
        <taxon>Gammaproteobacteria</taxon>
        <taxon>Pseudomonadales</taxon>
        <taxon>Pseudomonadaceae</taxon>
        <taxon>Pseudomonas</taxon>
    </lineage>
</organism>
<comment type="function">
    <text evidence="1">Ring cyclization and eight-electron oxidation of 3a-(2-amino-2-carboxyethyl)-4,5-dioxo-4,5,6,7,8,9-hexahydroquinoline-7,9-dicarboxylic-acid to PQQ.</text>
</comment>
<comment type="catalytic activity">
    <reaction>
        <text>6-(2-amino-2-carboxyethyl)-7,8-dioxo-1,2,3,4,7,8-hexahydroquinoline-2,4-dicarboxylate + 3 O2 = pyrroloquinoline quinone + 2 H2O2 + 2 H2O + H(+)</text>
        <dbReference type="Rhea" id="RHEA:10692"/>
        <dbReference type="ChEBI" id="CHEBI:15377"/>
        <dbReference type="ChEBI" id="CHEBI:15378"/>
        <dbReference type="ChEBI" id="CHEBI:15379"/>
        <dbReference type="ChEBI" id="CHEBI:16240"/>
        <dbReference type="ChEBI" id="CHEBI:58442"/>
        <dbReference type="ChEBI" id="CHEBI:58778"/>
        <dbReference type="EC" id="1.3.3.11"/>
    </reaction>
</comment>
<comment type="pathway">
    <text>Cofactor biosynthesis; pyrroloquinoline quinone biosynthesis.</text>
</comment>
<comment type="similarity">
    <text evidence="2">Belongs to the PqqC family.</text>
</comment>